<proteinExistence type="evidence at transcript level"/>
<organism>
    <name type="scientific">Solanum lycopersicum</name>
    <name type="common">Tomato</name>
    <name type="synonym">Lycopersicon esculentum</name>
    <dbReference type="NCBI Taxonomy" id="4081"/>
    <lineage>
        <taxon>Eukaryota</taxon>
        <taxon>Viridiplantae</taxon>
        <taxon>Streptophyta</taxon>
        <taxon>Embryophyta</taxon>
        <taxon>Tracheophyta</taxon>
        <taxon>Spermatophyta</taxon>
        <taxon>Magnoliopsida</taxon>
        <taxon>eudicotyledons</taxon>
        <taxon>Gunneridae</taxon>
        <taxon>Pentapetalae</taxon>
        <taxon>asterids</taxon>
        <taxon>lamiids</taxon>
        <taxon>Solanales</taxon>
        <taxon>Solanaceae</taxon>
        <taxon>Solanoideae</taxon>
        <taxon>Solaneae</taxon>
        <taxon>Solanum</taxon>
        <taxon>Solanum subgen. Lycopersicon</taxon>
    </lineage>
</organism>
<reference key="1">
    <citation type="journal article" date="1994" name="Plant Physiol.">
        <title>The cloning of two tomato lipoxygenase genes and their differential expression during fruit ripening.</title>
        <authorList>
            <person name="Ferrie B.J."/>
            <person name="Beaudoin N."/>
            <person name="Burkhart W."/>
            <person name="Bowsher C.G."/>
            <person name="Rothstein S.J."/>
        </authorList>
    </citation>
    <scope>NUCLEOTIDE SEQUENCE [MRNA]</scope>
    <source>
        <strain>cv. Caruso</strain>
        <tissue>Pericarp</tissue>
    </source>
</reference>
<name>LOXB_SOLLC</name>
<comment type="function">
    <text>Plant lipoxygenase may be involved in a number of diverse aspects of plant physiology including growth and development, pest resistance, and senescence or responses to wounding. It catalyzes the hydroperoxidation of lipids containing a cis,cis-1,4-pentadiene structure.</text>
</comment>
<comment type="catalytic activity">
    <reaction>
        <text>(9Z,12Z)-octadecadienoate + O2 = (9S)-hydroperoxy-(10E,12Z)-octadecadienoate</text>
        <dbReference type="Rhea" id="RHEA:30291"/>
        <dbReference type="ChEBI" id="CHEBI:15379"/>
        <dbReference type="ChEBI" id="CHEBI:30245"/>
        <dbReference type="ChEBI" id="CHEBI:60955"/>
        <dbReference type="EC" id="1.13.11.58"/>
    </reaction>
</comment>
<comment type="cofactor">
    <cofactor evidence="3">
        <name>Fe cation</name>
        <dbReference type="ChEBI" id="CHEBI:24875"/>
    </cofactor>
    <text evidence="3">Binds 1 Fe cation per subunit. Iron is tightly bound.</text>
</comment>
<comment type="pathway">
    <text evidence="3">Lipid metabolism; oxylipin biosynthesis.</text>
</comment>
<comment type="subunit">
    <text evidence="1">Monomer.</text>
</comment>
<comment type="subcellular location">
    <subcellularLocation>
        <location>Cytoplasm</location>
    </subcellularLocation>
</comment>
<comment type="tissue specificity">
    <text>Fruit specific.</text>
</comment>
<comment type="similarity">
    <text evidence="5">Belongs to the lipoxygenase family.</text>
</comment>
<keyword id="KW-0963">Cytoplasm</keyword>
<keyword id="KW-0223">Dioxygenase</keyword>
<keyword id="KW-0275">Fatty acid biosynthesis</keyword>
<keyword id="KW-0276">Fatty acid metabolism</keyword>
<keyword id="KW-0408">Iron</keyword>
<keyword id="KW-0444">Lipid biosynthesis</keyword>
<keyword id="KW-0443">Lipid metabolism</keyword>
<keyword id="KW-0479">Metal-binding</keyword>
<keyword id="KW-0560">Oxidoreductase</keyword>
<keyword id="KW-0925">Oxylipin biosynthesis</keyword>
<keyword id="KW-1185">Reference proteome</keyword>
<accession>P38416</accession>
<gene>
    <name type="primary">LOX1.2</name>
    <name type="synonym">LOXB</name>
</gene>
<sequence length="859" mass="97122">MSLGGIVDAILGKDDRPKVKGRVILMKKNVLDFINIGASVVDGISDLLGQKVSIQLISGSVNYDGLEGKLSNPAYLESWLTDITPITAGESTFSVTFDWDRDEFGVPGAFIIKNLHLNEFFLKSLTLEDVPNYGKIHFVCNSWVYPAFRYKSDRIFFANQAYLPSETPQPLRKYRENELVALRGDGTGKLEEWDRVYDYACYNDLGEPDKGEEYARPILGGSSEYPYPRRGRTGREPTKADPNCESRNPLPMSLDIYVPRDERFGHVKKSDFLTSSLKSSLQTLLPAFKALCDNTPNEFNSFADVLNLYEGGIKLPEGPWLKAITDNISSEILKDILQTDGQGLLKYPTPQVIQGDKTAWRTDEEFGREMLAGSNPVLISRLQEFPPKSKLDPTIYGNQNSTITTEHVQDKLNGLTVNEAIKSNRLFILNHHDIVMPLLRKINMSANTKAYASRTLLFLQDDRTLKPLAIELSLPHPDGDQFGTVSKVYTPADQGVEGSIWQFAKAYVAVNDMGIHQLISHWLNTHAVIEPFVVATNRHLSVLHPIHKLLHPHFRNTMNINALARETLTYDGGFETSLFPAKYSMEMSAAAYKDWVFPEQALPADLLKRGVAVEDLSSPHGIRLLILDYPYAVDGLEIWAAIKSWVTEYCKFYYKSDETVEKDTELQAWWKELREEGHGDKKDEAWWPKLQTRQELRDCCTIIIWIASALHAALHFGLYSYAGYLPNRPTLSCNLMPEPGSVEYEELKTNPDKVFLKTFVPQLQSLLEISIFEVSSRHASDEVYLGQRDSIEWTKDKEPLVAFERFGKMLSDIENRIMIMNSHKSWKNRSGPVNVPYTLLFPTSEEGLTGKGIPNSVSI</sequence>
<feature type="chain" id="PRO_0000220706" description="Linoleate 9S-lipoxygenase B">
    <location>
        <begin position="1"/>
        <end position="859"/>
    </location>
</feature>
<feature type="domain" description="PLAT" evidence="2">
    <location>
        <begin position="34"/>
        <end position="158"/>
    </location>
</feature>
<feature type="domain" description="Lipoxygenase" evidence="3">
    <location>
        <begin position="161"/>
        <end position="859"/>
    </location>
</feature>
<feature type="region of interest" description="Disordered" evidence="4">
    <location>
        <begin position="213"/>
        <end position="246"/>
    </location>
</feature>
<feature type="compositionally biased region" description="Basic and acidic residues" evidence="4">
    <location>
        <begin position="233"/>
        <end position="244"/>
    </location>
</feature>
<feature type="binding site" evidence="3">
    <location>
        <position position="521"/>
    </location>
    <ligand>
        <name>Fe cation</name>
        <dbReference type="ChEBI" id="CHEBI:24875"/>
        <note>catalytic</note>
    </ligand>
</feature>
<feature type="binding site" evidence="3">
    <location>
        <position position="526"/>
    </location>
    <ligand>
        <name>Fe cation</name>
        <dbReference type="ChEBI" id="CHEBI:24875"/>
        <note>catalytic</note>
    </ligand>
</feature>
<feature type="binding site" evidence="3">
    <location>
        <position position="711"/>
    </location>
    <ligand>
        <name>Fe cation</name>
        <dbReference type="ChEBI" id="CHEBI:24875"/>
        <note>catalytic</note>
    </ligand>
</feature>
<feature type="binding site" evidence="3">
    <location>
        <position position="859"/>
    </location>
    <ligand>
        <name>Fe cation</name>
        <dbReference type="ChEBI" id="CHEBI:24875"/>
        <note>catalytic</note>
    </ligand>
</feature>
<protein>
    <recommendedName>
        <fullName>Linoleate 9S-lipoxygenase B</fullName>
        <ecNumber>1.13.11.58</ecNumber>
    </recommendedName>
    <alternativeName>
        <fullName>Lipoxygenase B</fullName>
    </alternativeName>
</protein>
<dbReference type="EC" id="1.13.11.58"/>
<dbReference type="EMBL" id="U09025">
    <property type="protein sequence ID" value="AAA53183.1"/>
    <property type="molecule type" value="mRNA"/>
</dbReference>
<dbReference type="PIR" id="T06339">
    <property type="entry name" value="T06339"/>
</dbReference>
<dbReference type="SMR" id="P38416"/>
<dbReference type="FunCoup" id="P38416">
    <property type="interactions" value="97"/>
</dbReference>
<dbReference type="STRING" id="4081.P38416"/>
<dbReference type="PaxDb" id="4081-Solyc01g099190.2.1"/>
<dbReference type="eggNOG" id="ENOG502QQSP">
    <property type="taxonomic scope" value="Eukaryota"/>
</dbReference>
<dbReference type="InParanoid" id="P38416"/>
<dbReference type="UniPathway" id="UPA00382"/>
<dbReference type="Proteomes" id="UP000004994">
    <property type="component" value="Unplaced"/>
</dbReference>
<dbReference type="ExpressionAtlas" id="P38416">
    <property type="expression patterns" value="baseline"/>
</dbReference>
<dbReference type="GO" id="GO:0005737">
    <property type="term" value="C:cytoplasm"/>
    <property type="evidence" value="ECO:0007669"/>
    <property type="project" value="UniProtKB-SubCell"/>
</dbReference>
<dbReference type="GO" id="GO:1990136">
    <property type="term" value="F:linoleate 9S-lipoxygenase activity"/>
    <property type="evidence" value="ECO:0007669"/>
    <property type="project" value="UniProtKB-EC"/>
</dbReference>
<dbReference type="GO" id="GO:0046872">
    <property type="term" value="F:metal ion binding"/>
    <property type="evidence" value="ECO:0007669"/>
    <property type="project" value="UniProtKB-KW"/>
</dbReference>
<dbReference type="GO" id="GO:0016702">
    <property type="term" value="F:oxidoreductase activity, acting on single donors with incorporation of molecular oxygen, incorporation of two atoms of oxygen"/>
    <property type="evidence" value="ECO:0000318"/>
    <property type="project" value="GO_Central"/>
</dbReference>
<dbReference type="GO" id="GO:0006633">
    <property type="term" value="P:fatty acid biosynthetic process"/>
    <property type="evidence" value="ECO:0007669"/>
    <property type="project" value="UniProtKB-KW"/>
</dbReference>
<dbReference type="GO" id="GO:0034440">
    <property type="term" value="P:lipid oxidation"/>
    <property type="evidence" value="ECO:0000318"/>
    <property type="project" value="GO_Central"/>
</dbReference>
<dbReference type="GO" id="GO:0031408">
    <property type="term" value="P:oxylipin biosynthetic process"/>
    <property type="evidence" value="ECO:0007669"/>
    <property type="project" value="UniProtKB-UniPathway"/>
</dbReference>
<dbReference type="CDD" id="cd01751">
    <property type="entry name" value="PLAT_LH2"/>
    <property type="match status" value="1"/>
</dbReference>
<dbReference type="FunFam" id="1.20.245.10:FF:000002">
    <property type="entry name" value="Lipoxygenase"/>
    <property type="match status" value="1"/>
</dbReference>
<dbReference type="FunFam" id="3.10.450.60:FF:000002">
    <property type="entry name" value="Lipoxygenase"/>
    <property type="match status" value="1"/>
</dbReference>
<dbReference type="FunFam" id="4.10.372.10:FF:000001">
    <property type="entry name" value="Lipoxygenase"/>
    <property type="match status" value="1"/>
</dbReference>
<dbReference type="FunFam" id="4.10.375.10:FF:000001">
    <property type="entry name" value="Lipoxygenase"/>
    <property type="match status" value="1"/>
</dbReference>
<dbReference type="Gene3D" id="3.10.450.60">
    <property type="match status" value="1"/>
</dbReference>
<dbReference type="Gene3D" id="4.10.375.10">
    <property type="entry name" value="Lipoxygenase-1, Domain 2"/>
    <property type="match status" value="1"/>
</dbReference>
<dbReference type="Gene3D" id="4.10.372.10">
    <property type="entry name" value="Lipoxygenase-1, Domain 3"/>
    <property type="match status" value="1"/>
</dbReference>
<dbReference type="Gene3D" id="1.20.245.10">
    <property type="entry name" value="Lipoxygenase-1, Domain 5"/>
    <property type="match status" value="1"/>
</dbReference>
<dbReference type="Gene3D" id="2.60.60.20">
    <property type="entry name" value="PLAT/LH2 domain"/>
    <property type="match status" value="1"/>
</dbReference>
<dbReference type="InterPro" id="IPR000907">
    <property type="entry name" value="LipOase"/>
</dbReference>
<dbReference type="InterPro" id="IPR013819">
    <property type="entry name" value="LipOase_C"/>
</dbReference>
<dbReference type="InterPro" id="IPR036226">
    <property type="entry name" value="LipOase_C_sf"/>
</dbReference>
<dbReference type="InterPro" id="IPR020834">
    <property type="entry name" value="LipOase_CS"/>
</dbReference>
<dbReference type="InterPro" id="IPR020833">
    <property type="entry name" value="LipOase_Fe_BS"/>
</dbReference>
<dbReference type="InterPro" id="IPR001246">
    <property type="entry name" value="LipOase_plant"/>
</dbReference>
<dbReference type="InterPro" id="IPR042057">
    <property type="entry name" value="Lipoxy_PLAT/LH2"/>
</dbReference>
<dbReference type="InterPro" id="IPR027433">
    <property type="entry name" value="Lipoxygenase_dom_3"/>
</dbReference>
<dbReference type="InterPro" id="IPR001024">
    <property type="entry name" value="PLAT/LH2_dom"/>
</dbReference>
<dbReference type="InterPro" id="IPR036392">
    <property type="entry name" value="PLAT/LH2_dom_sf"/>
</dbReference>
<dbReference type="PANTHER" id="PTHR11771">
    <property type="entry name" value="LIPOXYGENASE"/>
    <property type="match status" value="1"/>
</dbReference>
<dbReference type="Pfam" id="PF00305">
    <property type="entry name" value="Lipoxygenase"/>
    <property type="match status" value="1"/>
</dbReference>
<dbReference type="Pfam" id="PF01477">
    <property type="entry name" value="PLAT"/>
    <property type="match status" value="1"/>
</dbReference>
<dbReference type="PRINTS" id="PR00087">
    <property type="entry name" value="LIPOXYGENASE"/>
</dbReference>
<dbReference type="PRINTS" id="PR00468">
    <property type="entry name" value="PLTLPOXGNASE"/>
</dbReference>
<dbReference type="SMART" id="SM00308">
    <property type="entry name" value="LH2"/>
    <property type="match status" value="1"/>
</dbReference>
<dbReference type="SUPFAM" id="SSF49723">
    <property type="entry name" value="Lipase/lipooxygenase domain (PLAT/LH2 domain)"/>
    <property type="match status" value="1"/>
</dbReference>
<dbReference type="SUPFAM" id="SSF48484">
    <property type="entry name" value="Lipoxigenase"/>
    <property type="match status" value="1"/>
</dbReference>
<dbReference type="PROSITE" id="PS00711">
    <property type="entry name" value="LIPOXYGENASE_1"/>
    <property type="match status" value="1"/>
</dbReference>
<dbReference type="PROSITE" id="PS00081">
    <property type="entry name" value="LIPOXYGENASE_2"/>
    <property type="match status" value="1"/>
</dbReference>
<dbReference type="PROSITE" id="PS51393">
    <property type="entry name" value="LIPOXYGENASE_3"/>
    <property type="match status" value="1"/>
</dbReference>
<dbReference type="PROSITE" id="PS50095">
    <property type="entry name" value="PLAT"/>
    <property type="match status" value="1"/>
</dbReference>
<evidence type="ECO:0000250" key="1"/>
<evidence type="ECO:0000255" key="2">
    <source>
        <dbReference type="PROSITE-ProRule" id="PRU00152"/>
    </source>
</evidence>
<evidence type="ECO:0000255" key="3">
    <source>
        <dbReference type="PROSITE-ProRule" id="PRU00726"/>
    </source>
</evidence>
<evidence type="ECO:0000256" key="4">
    <source>
        <dbReference type="SAM" id="MobiDB-lite"/>
    </source>
</evidence>
<evidence type="ECO:0000305" key="5"/>